<accession>B5RCU8</accession>
<gene>
    <name evidence="1" type="primary">yfeW</name>
    <name type="ordered locus">SG2508</name>
</gene>
<keyword id="KW-0121">Carboxypeptidase</keyword>
<keyword id="KW-0997">Cell inner membrane</keyword>
<keyword id="KW-1003">Cell membrane</keyword>
<keyword id="KW-0378">Hydrolase</keyword>
<keyword id="KW-0472">Membrane</keyword>
<keyword id="KW-0645">Protease</keyword>
<keyword id="KW-0812">Transmembrane</keyword>
<keyword id="KW-1133">Transmembrane helix</keyword>
<comment type="catalytic activity">
    <reaction evidence="1">
        <text>Preferential cleavage: (Ac)2-L-Lys-D-Ala-|-D-Ala. Also transpeptidation of peptidyl-alanyl moieties that are N-acyl substituents of D-alanine.</text>
        <dbReference type="EC" id="3.4.16.4"/>
    </reaction>
</comment>
<comment type="subcellular location">
    <subcellularLocation>
        <location evidence="1">Cell inner membrane</location>
        <topology evidence="1">Single-pass membrane protein</topology>
    </subcellularLocation>
</comment>
<comment type="similarity">
    <text evidence="1">Belongs to the peptidase S12 family. YfeW subfamily.</text>
</comment>
<sequence length="432" mass="47839">MKFTLVATVLLTFSLSAFAVEYPVLTIASPDQVGFDSQKLHRLDGWIQNQIDAGYPSINLLVIKDNHIVLQKAWGYAKKYDGSTLLAHPIRATTNTMYDLASNTKMYATNFALQKLVYEGKIDVNDLVSKYIPGFKDMPGDKIKGKDKLRIIDILHHVAGFPADPQYPNKNVAGKLFSQSKSTTLEMIKKTPLEYQPRSKHIYSDVDYMILGFIIESITAMPLDRYVETTIYKPLGLKHTVFNPLMKGFTPPQIAATELHGNTRDGVIHFPNIRTNTLWGQVHDEKAWYSMGGVSGHAGLFSDTHDMAVLMQVMLNGGGYGNLKLFDDKTVAQFTRRSPEDATFGLGWRVNGNSSMTPTFGVLASPQTYGHTGWTGTLTSIDPVNHMAIVILGNRPHSPVANPKVNPNVFVSGLLPAATYGWIVDQIYGSLK</sequence>
<name>YFEW_SALG2</name>
<feature type="chain" id="PRO_5000398406" description="Putative D-alanyl-D-alanine carboxypeptidase">
    <location>
        <begin position="1"/>
        <end position="432"/>
    </location>
</feature>
<feature type="transmembrane region" description="Helical; Signal-anchor" evidence="1">
    <location>
        <begin position="7"/>
        <end position="25"/>
    </location>
</feature>
<organism>
    <name type="scientific">Salmonella gallinarum (strain 287/91 / NCTC 13346)</name>
    <dbReference type="NCBI Taxonomy" id="550538"/>
    <lineage>
        <taxon>Bacteria</taxon>
        <taxon>Pseudomonadati</taxon>
        <taxon>Pseudomonadota</taxon>
        <taxon>Gammaproteobacteria</taxon>
        <taxon>Enterobacterales</taxon>
        <taxon>Enterobacteriaceae</taxon>
        <taxon>Salmonella</taxon>
    </lineage>
</organism>
<reference key="1">
    <citation type="journal article" date="2008" name="Genome Res.">
        <title>Comparative genome analysis of Salmonella enteritidis PT4 and Salmonella gallinarum 287/91 provides insights into evolutionary and host adaptation pathways.</title>
        <authorList>
            <person name="Thomson N.R."/>
            <person name="Clayton D.J."/>
            <person name="Windhorst D."/>
            <person name="Vernikos G."/>
            <person name="Davidson S."/>
            <person name="Churcher C."/>
            <person name="Quail M.A."/>
            <person name="Stevens M."/>
            <person name="Jones M.A."/>
            <person name="Watson M."/>
            <person name="Barron A."/>
            <person name="Layton A."/>
            <person name="Pickard D."/>
            <person name="Kingsley R.A."/>
            <person name="Bignell A."/>
            <person name="Clark L."/>
            <person name="Harris B."/>
            <person name="Ormond D."/>
            <person name="Abdellah Z."/>
            <person name="Brooks K."/>
            <person name="Cherevach I."/>
            <person name="Chillingworth T."/>
            <person name="Woodward J."/>
            <person name="Norberczak H."/>
            <person name="Lord A."/>
            <person name="Arrowsmith C."/>
            <person name="Jagels K."/>
            <person name="Moule S."/>
            <person name="Mungall K."/>
            <person name="Saunders M."/>
            <person name="Whitehead S."/>
            <person name="Chabalgoity J.A."/>
            <person name="Maskell D."/>
            <person name="Humphreys T."/>
            <person name="Roberts M."/>
            <person name="Barrow P.A."/>
            <person name="Dougan G."/>
            <person name="Parkhill J."/>
        </authorList>
    </citation>
    <scope>NUCLEOTIDE SEQUENCE [LARGE SCALE GENOMIC DNA]</scope>
    <source>
        <strain>287/91 / NCTC 13346</strain>
    </source>
</reference>
<proteinExistence type="inferred from homology"/>
<protein>
    <recommendedName>
        <fullName evidence="1">Putative D-alanyl-D-alanine carboxypeptidase</fullName>
        <ecNumber evidence="1">3.4.16.4</ecNumber>
    </recommendedName>
    <alternativeName>
        <fullName evidence="1">DD-carboxypeptidase</fullName>
        <shortName evidence="1">DD-CPase</shortName>
    </alternativeName>
</protein>
<evidence type="ECO:0000255" key="1">
    <source>
        <dbReference type="HAMAP-Rule" id="MF_01034"/>
    </source>
</evidence>
<dbReference type="EC" id="3.4.16.4" evidence="1"/>
<dbReference type="EMBL" id="AM933173">
    <property type="protein sequence ID" value="CAR38334.1"/>
    <property type="molecule type" value="Genomic_DNA"/>
</dbReference>
<dbReference type="SMR" id="B5RCU8"/>
<dbReference type="MEROPS" id="S12.A03"/>
<dbReference type="KEGG" id="seg:SG2508"/>
<dbReference type="HOGENOM" id="CLU_020027_1_2_6"/>
<dbReference type="Proteomes" id="UP000008321">
    <property type="component" value="Chromosome"/>
</dbReference>
<dbReference type="GO" id="GO:0005886">
    <property type="term" value="C:plasma membrane"/>
    <property type="evidence" value="ECO:0007669"/>
    <property type="project" value="UniProtKB-SubCell"/>
</dbReference>
<dbReference type="GO" id="GO:0009002">
    <property type="term" value="F:serine-type D-Ala-D-Ala carboxypeptidase activity"/>
    <property type="evidence" value="ECO:0007669"/>
    <property type="project" value="UniProtKB-UniRule"/>
</dbReference>
<dbReference type="GO" id="GO:0006508">
    <property type="term" value="P:proteolysis"/>
    <property type="evidence" value="ECO:0007669"/>
    <property type="project" value="UniProtKB-KW"/>
</dbReference>
<dbReference type="Gene3D" id="3.40.710.10">
    <property type="entry name" value="DD-peptidase/beta-lactamase superfamily"/>
    <property type="match status" value="1"/>
</dbReference>
<dbReference type="HAMAP" id="MF_01034">
    <property type="entry name" value="S12_YfeW"/>
    <property type="match status" value="1"/>
</dbReference>
<dbReference type="InterPro" id="IPR001466">
    <property type="entry name" value="Beta-lactam-related"/>
</dbReference>
<dbReference type="InterPro" id="IPR012338">
    <property type="entry name" value="Beta-lactam/transpept-like"/>
</dbReference>
<dbReference type="InterPro" id="IPR050789">
    <property type="entry name" value="Diverse_Enzym_Activities"/>
</dbReference>
<dbReference type="InterPro" id="IPR022849">
    <property type="entry name" value="Pept_S12_YfeW/YbbE-like"/>
</dbReference>
<dbReference type="NCBIfam" id="NF002968">
    <property type="entry name" value="PRK03642.1"/>
    <property type="match status" value="1"/>
</dbReference>
<dbReference type="PANTHER" id="PTHR43283">
    <property type="entry name" value="BETA-LACTAMASE-RELATED"/>
    <property type="match status" value="1"/>
</dbReference>
<dbReference type="PANTHER" id="PTHR43283:SF11">
    <property type="entry name" value="BETA-LACTAMASE-RELATED DOMAIN-CONTAINING PROTEIN"/>
    <property type="match status" value="1"/>
</dbReference>
<dbReference type="Pfam" id="PF00144">
    <property type="entry name" value="Beta-lactamase"/>
    <property type="match status" value="1"/>
</dbReference>
<dbReference type="SUPFAM" id="SSF56601">
    <property type="entry name" value="beta-lactamase/transpeptidase-like"/>
    <property type="match status" value="1"/>
</dbReference>